<sequence>MMILGKAGILAQYGTIYVRQNTIRNNLSSCIFKQSLCAFHSLAKVLQQKQVPLDLSYDIIKRDAVKTGDEGKPRPPIIILHGLFGNKLNNRSIGRNLNKKLGRDVYLLDLRNHGSSPHSSVHNYEVMSEDVKHFITKHELNTNGGPIIIGHSMGGKVAMMLVLKNPQLCSMLVCIENAPVSLRPNAEFVEYIKALMEIVNDKGKTIRTLKQADEHLAERIGGNELVRRFLLTALKKVKMDNSSSVSSYTFEERIPLATLKDAIVKGEIAAWPLDPARERWTRPALFIRATQSHYVVDEYLPIIGAFFPRFETRDIDAGHWVNAEKPGECAESIVDFVERHED</sequence>
<proteinExistence type="evidence at protein level"/>
<name>IMO32_YEAST</name>
<keyword id="KW-0378">Hydrolase</keyword>
<keyword id="KW-0496">Mitochondrion</keyword>
<keyword id="KW-1185">Reference proteome</keyword>
<keyword id="KW-0808">Transferase</keyword>
<keyword id="KW-0809">Transit peptide</keyword>
<gene>
    <name type="primary">IMO32</name>
    <name type="ordered locus">YGR031W</name>
</gene>
<evidence type="ECO:0000250" key="1">
    <source>
        <dbReference type="UniProtKB" id="A0A1E3P8S6"/>
    </source>
</evidence>
<evidence type="ECO:0000255" key="2"/>
<evidence type="ECO:0000269" key="3">
    <source>
    </source>
</evidence>
<evidence type="ECO:0000269" key="4">
    <source>
    </source>
</evidence>
<evidence type="ECO:0000269" key="5">
    <source>
    </source>
</evidence>
<evidence type="ECO:0000269" key="6">
    <source>
    </source>
</evidence>
<evidence type="ECO:0000269" key="7">
    <source>
    </source>
</evidence>
<evidence type="ECO:0000305" key="8"/>
<evidence type="ECO:0000305" key="9">
    <source>
    </source>
</evidence>
<dbReference type="EC" id="2.3.1.-"/>
<dbReference type="EMBL" id="DQ115390">
    <property type="protein sequence ID" value="AAZ22445.1"/>
    <property type="molecule type" value="Genomic_DNA"/>
</dbReference>
<dbReference type="EMBL" id="Z72816">
    <property type="protein sequence ID" value="CAA97019.1"/>
    <property type="molecule type" value="Genomic_DNA"/>
</dbReference>
<dbReference type="EMBL" id="AY557770">
    <property type="protein sequence ID" value="AAS56096.1"/>
    <property type="molecule type" value="Genomic_DNA"/>
</dbReference>
<dbReference type="EMBL" id="BK006941">
    <property type="protein sequence ID" value="DAA08127.1"/>
    <property type="molecule type" value="Genomic_DNA"/>
</dbReference>
<dbReference type="PIR" id="S64322">
    <property type="entry name" value="S64322"/>
</dbReference>
<dbReference type="RefSeq" id="NP_011545.1">
    <property type="nucleotide sequence ID" value="NM_001181160.1"/>
</dbReference>
<dbReference type="SMR" id="P53219"/>
<dbReference type="BioGRID" id="33276">
    <property type="interactions" value="45"/>
</dbReference>
<dbReference type="DIP" id="DIP-5604N"/>
<dbReference type="FunCoup" id="P53219">
    <property type="interactions" value="569"/>
</dbReference>
<dbReference type="IntAct" id="P53219">
    <property type="interactions" value="3"/>
</dbReference>
<dbReference type="MINT" id="P53219"/>
<dbReference type="STRING" id="4932.YGR031W"/>
<dbReference type="ESTHER" id="yeast-yg1l">
    <property type="family name" value="ABHD11-Acetyl_transferase"/>
</dbReference>
<dbReference type="PaxDb" id="4932-YGR031W"/>
<dbReference type="PeptideAtlas" id="P53219"/>
<dbReference type="EnsemblFungi" id="YGR031W_mRNA">
    <property type="protein sequence ID" value="YGR031W"/>
    <property type="gene ID" value="YGR031W"/>
</dbReference>
<dbReference type="GeneID" id="852919"/>
<dbReference type="KEGG" id="sce:YGR031W"/>
<dbReference type="AGR" id="SGD:S000003263"/>
<dbReference type="SGD" id="S000003263">
    <property type="gene designation" value="IMO32"/>
</dbReference>
<dbReference type="VEuPathDB" id="FungiDB:YGR031W"/>
<dbReference type="eggNOG" id="KOG2382">
    <property type="taxonomic scope" value="Eukaryota"/>
</dbReference>
<dbReference type="GeneTree" id="ENSGT00390000015880"/>
<dbReference type="HOGENOM" id="CLU_020336_53_0_1"/>
<dbReference type="InParanoid" id="P53219"/>
<dbReference type="OMA" id="FLGMSDN"/>
<dbReference type="OrthoDB" id="8119704at2759"/>
<dbReference type="BioCyc" id="YEAST:G3O-30754-MONOMER"/>
<dbReference type="BioGRID-ORCS" id="852919">
    <property type="hits" value="2 hits in 10 CRISPR screens"/>
</dbReference>
<dbReference type="PRO" id="PR:P53219"/>
<dbReference type="Proteomes" id="UP000002311">
    <property type="component" value="Chromosome VII"/>
</dbReference>
<dbReference type="RNAct" id="P53219">
    <property type="molecule type" value="protein"/>
</dbReference>
<dbReference type="GO" id="GO:0005739">
    <property type="term" value="C:mitochondrion"/>
    <property type="evidence" value="ECO:0000314"/>
    <property type="project" value="SGD"/>
</dbReference>
<dbReference type="GO" id="GO:0052689">
    <property type="term" value="F:carboxylic ester hydrolase activity"/>
    <property type="evidence" value="ECO:0000318"/>
    <property type="project" value="GO_Central"/>
</dbReference>
<dbReference type="GO" id="GO:0016740">
    <property type="term" value="F:transferase activity"/>
    <property type="evidence" value="ECO:0007669"/>
    <property type="project" value="UniProtKB-KW"/>
</dbReference>
<dbReference type="GO" id="GO:0004806">
    <property type="term" value="F:triacylglycerol lipase activity"/>
    <property type="evidence" value="ECO:0000314"/>
    <property type="project" value="SGD"/>
</dbReference>
<dbReference type="GO" id="GO:0006629">
    <property type="term" value="P:lipid metabolic process"/>
    <property type="evidence" value="ECO:0000314"/>
    <property type="project" value="SGD"/>
</dbReference>
<dbReference type="FunFam" id="3.40.50.1820:FF:000384">
    <property type="entry name" value="YGR031W-like protein"/>
    <property type="match status" value="1"/>
</dbReference>
<dbReference type="Gene3D" id="3.40.50.1820">
    <property type="entry name" value="alpha/beta hydrolase"/>
    <property type="match status" value="1"/>
</dbReference>
<dbReference type="InterPro" id="IPR000073">
    <property type="entry name" value="AB_hydrolase_1"/>
</dbReference>
<dbReference type="InterPro" id="IPR029058">
    <property type="entry name" value="AB_hydrolase_fold"/>
</dbReference>
<dbReference type="PANTHER" id="PTHR46118">
    <property type="entry name" value="PROTEIN ABHD11"/>
    <property type="match status" value="1"/>
</dbReference>
<dbReference type="PANTHER" id="PTHR46118:SF4">
    <property type="entry name" value="PROTEIN ABHD11"/>
    <property type="match status" value="1"/>
</dbReference>
<dbReference type="Pfam" id="PF00561">
    <property type="entry name" value="Abhydrolase_1"/>
    <property type="match status" value="1"/>
</dbReference>
<dbReference type="SUPFAM" id="SSF53474">
    <property type="entry name" value="alpha/beta-Hydrolases"/>
    <property type="match status" value="1"/>
</dbReference>
<organism>
    <name type="scientific">Saccharomyces cerevisiae (strain ATCC 204508 / S288c)</name>
    <name type="common">Baker's yeast</name>
    <dbReference type="NCBI Taxonomy" id="559292"/>
    <lineage>
        <taxon>Eukaryota</taxon>
        <taxon>Fungi</taxon>
        <taxon>Dikarya</taxon>
        <taxon>Ascomycota</taxon>
        <taxon>Saccharomycotina</taxon>
        <taxon>Saccharomycetes</taxon>
        <taxon>Saccharomycetales</taxon>
        <taxon>Saccharomycetaceae</taxon>
        <taxon>Saccharomyces</taxon>
    </lineage>
</organism>
<protein>
    <recommendedName>
        <fullName>Probable alcohol acetyltransferase</fullName>
        <shortName>AAT</shortName>
        <ecNumber>2.3.1.-</ecNumber>
    </recommendedName>
    <alternativeName>
        <fullName>Intermediate cleaved by mitochondrial octapeptidyl aminopeptidase protein 32</fullName>
    </alternativeName>
</protein>
<comment type="function">
    <text evidence="7 9">Probable alcohol acetyltransferase that uses acetyl-CoA to synthesize acetate esters from various alcohols (Probable). Not involved in the synthesis of ethyl acetate (PubMed:28356220).</text>
</comment>
<comment type="subcellular location">
    <subcellularLocation>
        <location evidence="3 5">Mitochondrion</location>
    </subcellularLocation>
</comment>
<comment type="PTM">
    <text>Processed by both the mitochondrial processing peptidase (MPP) and the mitochondrial octapeptidyl aminopeptidase (OCT1).</text>
</comment>
<comment type="miscellaneous">
    <text evidence="4">Present with 7400 molecules/cell in log phase SD medium.</text>
</comment>
<comment type="miscellaneous">
    <text>The gene contains the nested antisense gene NAG1.</text>
</comment>
<comment type="similarity">
    <text evidence="8">Belongs to the AB hydrolase superfamily.</text>
</comment>
<reference key="1">
    <citation type="journal article" date="2005" name="Nat. Genet.">
        <title>Quantitative trait loci mapped to single-nucleotide resolution in yeast.</title>
        <authorList>
            <person name="Deutschbauer A.M."/>
            <person name="Davis R.W."/>
        </authorList>
    </citation>
    <scope>NUCLEOTIDE SEQUENCE [GENOMIC DNA]</scope>
    <source>
        <strain>SK1</strain>
    </source>
</reference>
<reference key="2">
    <citation type="journal article" date="1997" name="Yeast">
        <title>Sequence analysis of 203 kilobases from Saccharomyces cerevisiae chromosome VII.</title>
        <authorList>
            <person name="Rieger M."/>
            <person name="Brueckner M."/>
            <person name="Schaefer M."/>
            <person name="Mueller-Auer S."/>
        </authorList>
    </citation>
    <scope>NUCLEOTIDE SEQUENCE [GENOMIC DNA]</scope>
    <source>
        <strain>ATCC 204508 / S288c</strain>
    </source>
</reference>
<reference key="3">
    <citation type="journal article" date="1997" name="Nature">
        <title>The nucleotide sequence of Saccharomyces cerevisiae chromosome VII.</title>
        <authorList>
            <person name="Tettelin H."/>
            <person name="Agostoni-Carbone M.L."/>
            <person name="Albermann K."/>
            <person name="Albers M."/>
            <person name="Arroyo J."/>
            <person name="Backes U."/>
            <person name="Barreiros T."/>
            <person name="Bertani I."/>
            <person name="Bjourson A.J."/>
            <person name="Brueckner M."/>
            <person name="Bruschi C.V."/>
            <person name="Carignani G."/>
            <person name="Castagnoli L."/>
            <person name="Cerdan E."/>
            <person name="Clemente M.L."/>
            <person name="Coblenz A."/>
            <person name="Coglievina M."/>
            <person name="Coissac E."/>
            <person name="Defoor E."/>
            <person name="Del Bino S."/>
            <person name="Delius H."/>
            <person name="Delneri D."/>
            <person name="de Wergifosse P."/>
            <person name="Dujon B."/>
            <person name="Durand P."/>
            <person name="Entian K.-D."/>
            <person name="Eraso P."/>
            <person name="Escribano V."/>
            <person name="Fabiani L."/>
            <person name="Fartmann B."/>
            <person name="Feroli F."/>
            <person name="Feuermann M."/>
            <person name="Frontali L."/>
            <person name="Garcia-Gonzalez M."/>
            <person name="Garcia-Saez M.I."/>
            <person name="Goffeau A."/>
            <person name="Guerreiro P."/>
            <person name="Hani J."/>
            <person name="Hansen M."/>
            <person name="Hebling U."/>
            <person name="Hernandez K."/>
            <person name="Heumann K."/>
            <person name="Hilger F."/>
            <person name="Hofmann B."/>
            <person name="Indge K.J."/>
            <person name="James C.M."/>
            <person name="Klima R."/>
            <person name="Koetter P."/>
            <person name="Kramer B."/>
            <person name="Kramer W."/>
            <person name="Lauquin G."/>
            <person name="Leuther H."/>
            <person name="Louis E.J."/>
            <person name="Maillier E."/>
            <person name="Marconi A."/>
            <person name="Martegani E."/>
            <person name="Mazon M.J."/>
            <person name="Mazzoni C."/>
            <person name="McReynolds A.D.K."/>
            <person name="Melchioretto P."/>
            <person name="Mewes H.-W."/>
            <person name="Minenkova O."/>
            <person name="Mueller-Auer S."/>
            <person name="Nawrocki A."/>
            <person name="Netter P."/>
            <person name="Neu R."/>
            <person name="Nombela C."/>
            <person name="Oliver S.G."/>
            <person name="Panzeri L."/>
            <person name="Paoluzi S."/>
            <person name="Plevani P."/>
            <person name="Portetelle D."/>
            <person name="Portillo F."/>
            <person name="Potier S."/>
            <person name="Purnelle B."/>
            <person name="Rieger M."/>
            <person name="Riles L."/>
            <person name="Rinaldi T."/>
            <person name="Robben J."/>
            <person name="Rodrigues-Pousada C."/>
            <person name="Rodriguez-Belmonte E."/>
            <person name="Rodriguez-Torres A.M."/>
            <person name="Rose M."/>
            <person name="Ruzzi M."/>
            <person name="Saliola M."/>
            <person name="Sanchez-Perez M."/>
            <person name="Schaefer B."/>
            <person name="Schaefer M."/>
            <person name="Scharfe M."/>
            <person name="Schmidheini T."/>
            <person name="Schreer A."/>
            <person name="Skala J."/>
            <person name="Souciet J.-L."/>
            <person name="Steensma H.Y."/>
            <person name="Talla E."/>
            <person name="Thierry A."/>
            <person name="Vandenbol M."/>
            <person name="van der Aart Q.J.M."/>
            <person name="Van Dyck L."/>
            <person name="Vanoni M."/>
            <person name="Verhasselt P."/>
            <person name="Voet M."/>
            <person name="Volckaert G."/>
            <person name="Wambutt R."/>
            <person name="Watson M.D."/>
            <person name="Weber N."/>
            <person name="Wedler E."/>
            <person name="Wedler H."/>
            <person name="Wipfli P."/>
            <person name="Wolf K."/>
            <person name="Wright L.F."/>
            <person name="Zaccaria P."/>
            <person name="Zimmermann M."/>
            <person name="Zollner A."/>
            <person name="Kleine K."/>
        </authorList>
    </citation>
    <scope>NUCLEOTIDE SEQUENCE [LARGE SCALE GENOMIC DNA]</scope>
    <source>
        <strain>ATCC 204508 / S288c</strain>
    </source>
</reference>
<reference key="4">
    <citation type="journal article" date="2014" name="G3 (Bethesda)">
        <title>The reference genome sequence of Saccharomyces cerevisiae: Then and now.</title>
        <authorList>
            <person name="Engel S.R."/>
            <person name="Dietrich F.S."/>
            <person name="Fisk D.G."/>
            <person name="Binkley G."/>
            <person name="Balakrishnan R."/>
            <person name="Costanzo M.C."/>
            <person name="Dwight S.S."/>
            <person name="Hitz B.C."/>
            <person name="Karra K."/>
            <person name="Nash R.S."/>
            <person name="Weng S."/>
            <person name="Wong E.D."/>
            <person name="Lloyd P."/>
            <person name="Skrzypek M.S."/>
            <person name="Miyasato S.R."/>
            <person name="Simison M."/>
            <person name="Cherry J.M."/>
        </authorList>
    </citation>
    <scope>GENOME REANNOTATION</scope>
    <source>
        <strain>ATCC 204508 / S288c</strain>
    </source>
</reference>
<reference key="5">
    <citation type="journal article" date="2007" name="Genome Res.">
        <title>Approaching a complete repository of sequence-verified protein-encoding clones for Saccharomyces cerevisiae.</title>
        <authorList>
            <person name="Hu Y."/>
            <person name="Rolfs A."/>
            <person name="Bhullar B."/>
            <person name="Murthy T.V.S."/>
            <person name="Zhu C."/>
            <person name="Berger M.F."/>
            <person name="Camargo A.A."/>
            <person name="Kelley F."/>
            <person name="McCarron S."/>
            <person name="Jepson D."/>
            <person name="Richardson A."/>
            <person name="Raphael J."/>
            <person name="Moreira D."/>
            <person name="Taycher E."/>
            <person name="Zuo D."/>
            <person name="Mohr S."/>
            <person name="Kane M.F."/>
            <person name="Williamson J."/>
            <person name="Simpson A.J.G."/>
            <person name="Bulyk M.L."/>
            <person name="Harlow E."/>
            <person name="Marsischky G."/>
            <person name="Kolodner R.D."/>
            <person name="LaBaer J."/>
        </authorList>
    </citation>
    <scope>NUCLEOTIDE SEQUENCE [GENOMIC DNA]</scope>
    <source>
        <strain>ATCC 204508 / S288c</strain>
    </source>
</reference>
<reference key="6">
    <citation type="journal article" date="2003" name="Nature">
        <title>Global analysis of protein localization in budding yeast.</title>
        <authorList>
            <person name="Huh W.-K."/>
            <person name="Falvo J.V."/>
            <person name="Gerke L.C."/>
            <person name="Carroll A.S."/>
            <person name="Howson R.W."/>
            <person name="Weissman J.S."/>
            <person name="O'Shea E.K."/>
        </authorList>
    </citation>
    <scope>SUBCELLULAR LOCATION [LARGE SCALE ANALYSIS]</scope>
</reference>
<reference key="7">
    <citation type="journal article" date="2003" name="Nature">
        <title>Global analysis of protein expression in yeast.</title>
        <authorList>
            <person name="Ghaemmaghami S."/>
            <person name="Huh W.-K."/>
            <person name="Bower K."/>
            <person name="Howson R.W."/>
            <person name="Belle A."/>
            <person name="Dephoure N."/>
            <person name="O'Shea E.K."/>
            <person name="Weissman J.S."/>
        </authorList>
    </citation>
    <scope>LEVEL OF PROTEIN EXPRESSION [LARGE SCALE ANALYSIS]</scope>
</reference>
<reference key="8">
    <citation type="journal article" date="2006" name="J. Proteome Res.">
        <title>Toward the complete yeast mitochondrial proteome: multidimensional separation techniques for mitochondrial proteomics.</title>
        <authorList>
            <person name="Reinders J."/>
            <person name="Zahedi R.P."/>
            <person name="Pfanner N."/>
            <person name="Meisinger C."/>
            <person name="Sickmann A."/>
        </authorList>
    </citation>
    <scope>SUBCELLULAR LOCATION [LARGE SCALE ANALYSIS]</scope>
    <scope>IDENTIFICATION BY MASS SPECTROMETRY</scope>
</reference>
<reference key="9">
    <citation type="journal article" date="2011" name="Mol. Biol. Cell">
        <title>Mitochondrial protein turnover: role of the precursor intermediate peptidase Oct1 in protein stabilization.</title>
        <authorList>
            <person name="Vogtle F.N."/>
            <person name="Prinz C."/>
            <person name="Kellermann J."/>
            <person name="Lottspeich F."/>
            <person name="Pfanner N."/>
            <person name="Meisinger C."/>
        </authorList>
    </citation>
    <scope>PROCESSING OF N-TERMINUS</scope>
</reference>
<reference key="10">
    <citation type="journal article" date="2017" name="Metab. Eng.">
        <title>Ethyl acetate production by the elusive alcohol acetyltransferase from yeast.</title>
        <authorList>
            <person name="Kruis A.J."/>
            <person name="Levisson M."/>
            <person name="Mars A.E."/>
            <person name="van der Ploeg M."/>
            <person name="Garces Daza F."/>
            <person name="Ellena V."/>
            <person name="Kengen S.W.M."/>
            <person name="van der Oost J."/>
            <person name="Weusthuis R.A."/>
        </authorList>
    </citation>
    <scope>FUNCTION</scope>
    <source>
        <strain>CEN.PK2-1D</strain>
    </source>
</reference>
<accession>P53219</accession>
<accession>D6VUG6</accession>
<accession>Q45U54</accession>
<feature type="transit peptide" description="Mitochondrion" evidence="6">
    <location>
        <begin position="1"/>
        <end position="38"/>
    </location>
</feature>
<feature type="propeptide" id="PRO_0000410798" description="Removed in mature form" evidence="6">
    <location>
        <begin position="39"/>
        <end position="46"/>
    </location>
</feature>
<feature type="chain" id="PRO_0000202791" description="Probable alcohol acetyltransferase">
    <location>
        <begin position="47"/>
        <end position="342"/>
    </location>
</feature>
<feature type="domain" description="AB hydrolase-1" evidence="2">
    <location>
        <begin position="75"/>
        <end position="326"/>
    </location>
</feature>
<feature type="active site" description="Charge relay system" evidence="1">
    <location>
        <position position="152"/>
    </location>
</feature>
<feature type="active site" description="Charge relay system" evidence="1">
    <location>
        <position position="319"/>
    </location>
</feature>